<protein>
    <recommendedName>
        <fullName evidence="1">Enoyl-[acyl-carrier-protein] reductase [NADH] 2</fullName>
        <shortName evidence="1">ENR 2</shortName>
        <ecNumber evidence="1">1.3.1.9</ecNumber>
    </recommendedName>
</protein>
<dbReference type="EC" id="1.3.1.9" evidence="1"/>
<dbReference type="EMBL" id="CR378671">
    <property type="protein sequence ID" value="CAG20909.1"/>
    <property type="status" value="ALT_INIT"/>
    <property type="molecule type" value="Genomic_DNA"/>
</dbReference>
<dbReference type="RefSeq" id="WP_041394789.1">
    <property type="nucleotide sequence ID" value="NC_006370.1"/>
</dbReference>
<dbReference type="SMR" id="Q6LP67"/>
<dbReference type="STRING" id="298386.PBPRA2527"/>
<dbReference type="KEGG" id="ppr:PBPRA2527"/>
<dbReference type="eggNOG" id="COG3007">
    <property type="taxonomic scope" value="Bacteria"/>
</dbReference>
<dbReference type="HOGENOM" id="CLU_057698_1_0_6"/>
<dbReference type="UniPathway" id="UPA00094"/>
<dbReference type="Proteomes" id="UP000000593">
    <property type="component" value="Chromosome 1"/>
</dbReference>
<dbReference type="GO" id="GO:0004318">
    <property type="term" value="F:enoyl-[acyl-carrier-protein] reductase (NADH) activity"/>
    <property type="evidence" value="ECO:0007669"/>
    <property type="project" value="UniProtKB-UniRule"/>
</dbReference>
<dbReference type="GO" id="GO:0051287">
    <property type="term" value="F:NAD binding"/>
    <property type="evidence" value="ECO:0007669"/>
    <property type="project" value="UniProtKB-UniRule"/>
</dbReference>
<dbReference type="GO" id="GO:0050343">
    <property type="term" value="F:trans-2-enoyl-CoA reductase (NADH) activity"/>
    <property type="evidence" value="ECO:0007669"/>
    <property type="project" value="TreeGrafter"/>
</dbReference>
<dbReference type="GO" id="GO:0006633">
    <property type="term" value="P:fatty acid biosynthetic process"/>
    <property type="evidence" value="ECO:0007669"/>
    <property type="project" value="UniProtKB-UniRule"/>
</dbReference>
<dbReference type="Gene3D" id="3.40.50.720">
    <property type="entry name" value="NAD(P)-binding Rossmann-like Domain"/>
    <property type="match status" value="1"/>
</dbReference>
<dbReference type="HAMAP" id="MF_01838">
    <property type="entry name" value="FabV_reductase"/>
    <property type="match status" value="1"/>
</dbReference>
<dbReference type="InterPro" id="IPR024906">
    <property type="entry name" value="Eno_Rdtase_FAD-bd_dom"/>
</dbReference>
<dbReference type="InterPro" id="IPR024910">
    <property type="entry name" value="Enoyl-CoA_Rdtase_cat_dom"/>
</dbReference>
<dbReference type="InterPro" id="IPR050048">
    <property type="entry name" value="FabV-like_NADH_b"/>
</dbReference>
<dbReference type="InterPro" id="IPR036291">
    <property type="entry name" value="NAD(P)-bd_dom_sf"/>
</dbReference>
<dbReference type="InterPro" id="IPR010758">
    <property type="entry name" value="Trans-2-enoyl-CoA_reductase"/>
</dbReference>
<dbReference type="NCBIfam" id="NF043048">
    <property type="entry name" value="EnoyACPredFabV"/>
    <property type="match status" value="1"/>
</dbReference>
<dbReference type="NCBIfam" id="NF010177">
    <property type="entry name" value="PRK13656.1"/>
    <property type="match status" value="1"/>
</dbReference>
<dbReference type="PANTHER" id="PTHR37480">
    <property type="entry name" value="ENOYL-[ACYL-CARRIER-PROTEIN] REDUCTASE [NADH]"/>
    <property type="match status" value="1"/>
</dbReference>
<dbReference type="PANTHER" id="PTHR37480:SF1">
    <property type="entry name" value="ENOYL-[ACYL-CARRIER-PROTEIN] REDUCTASE [NADH]"/>
    <property type="match status" value="1"/>
</dbReference>
<dbReference type="Pfam" id="PF07055">
    <property type="entry name" value="Eno-Rase_FAD_bd"/>
    <property type="match status" value="1"/>
</dbReference>
<dbReference type="Pfam" id="PF12242">
    <property type="entry name" value="Eno-Rase_NADH_b"/>
    <property type="match status" value="1"/>
</dbReference>
<dbReference type="Pfam" id="PF12241">
    <property type="entry name" value="Enoyl_reductase"/>
    <property type="match status" value="1"/>
</dbReference>
<dbReference type="SUPFAM" id="SSF51735">
    <property type="entry name" value="NAD(P)-binding Rossmann-fold domains"/>
    <property type="match status" value="1"/>
</dbReference>
<comment type="function">
    <text evidence="1">Involved in the final reduction of the elongation cycle of fatty acid synthesis (FAS II). Catalyzes the reduction of a carbon-carbon double bond in an enoyl moiety that is covalently linked to an acyl carrier protein (ACP).</text>
</comment>
<comment type="catalytic activity">
    <reaction evidence="1">
        <text>a 2,3-saturated acyl-[ACP] + NAD(+) = a (2E)-enoyl-[ACP] + NADH + H(+)</text>
        <dbReference type="Rhea" id="RHEA:10240"/>
        <dbReference type="Rhea" id="RHEA-COMP:9925"/>
        <dbReference type="Rhea" id="RHEA-COMP:9926"/>
        <dbReference type="ChEBI" id="CHEBI:15378"/>
        <dbReference type="ChEBI" id="CHEBI:57540"/>
        <dbReference type="ChEBI" id="CHEBI:57945"/>
        <dbReference type="ChEBI" id="CHEBI:78784"/>
        <dbReference type="ChEBI" id="CHEBI:78785"/>
        <dbReference type="EC" id="1.3.1.9"/>
    </reaction>
</comment>
<comment type="pathway">
    <text evidence="1">Lipid metabolism; fatty acid biosynthesis.</text>
</comment>
<comment type="subunit">
    <text evidence="1">Monomer.</text>
</comment>
<comment type="similarity">
    <text evidence="1">Belongs to the TER reductase family.</text>
</comment>
<comment type="sequence caution" evidence="2">
    <conflict type="erroneous initiation">
        <sequence resource="EMBL-CDS" id="CAG20909"/>
    </conflict>
    <text>Extended N-terminus.</text>
</comment>
<sequence length="400" mass="43771">MIIEPVVKGVVARSAHPFGCQQAVRNQINYVRTADPVTDGPKKVLVLGASSGFGLASRISLAFGGSKADTIGISFERGPSEKGVGTAGWYNNIFFREEAENAGLIGKNFIGDAFTPQMRQQVIDYIKTEFGGQLDLVVYSLATGVRPNPETGELWRSSIKTMGEPVTGPTINIETDTMEQMTIGTATPAEIEDTEKVMGGEDWASWIDTLSEAGVLATGCKTVAYSYVGPKATYSIYHQGTLGRAKAHLHATADQLNDKMSEMGGEAYVSVCKALVTKASVFIPAFSPYILALFKVMKDKGVHEGCIEQMQRLYSQRLYGKNKIVPVDDSRLIRVDDWELEEDIQQQVSELMVKITPENFTTMGDYQGYKADFMQLNGFGLEGVDYQADIDFETLTQLVA</sequence>
<gene>
    <name evidence="1" type="primary">fabV2</name>
    <name type="ordered locus">PBPRA2527</name>
</gene>
<evidence type="ECO:0000255" key="1">
    <source>
        <dbReference type="HAMAP-Rule" id="MF_01838"/>
    </source>
</evidence>
<evidence type="ECO:0000305" key="2"/>
<accession>Q6LP67</accession>
<name>FABV2_PHOPR</name>
<feature type="chain" id="PRO_0000220044" description="Enoyl-[acyl-carrier-protein] reductase [NADH] 2">
    <location>
        <begin position="1"/>
        <end position="400"/>
    </location>
</feature>
<feature type="active site" description="Proton donor" evidence="1">
    <location>
        <position position="237"/>
    </location>
</feature>
<feature type="binding site" evidence="1">
    <location>
        <begin position="48"/>
        <end position="53"/>
    </location>
    <ligand>
        <name>NAD(+)</name>
        <dbReference type="ChEBI" id="CHEBI:57540"/>
    </ligand>
</feature>
<feature type="binding site" evidence="1">
    <location>
        <begin position="75"/>
        <end position="76"/>
    </location>
    <ligand>
        <name>NAD(+)</name>
        <dbReference type="ChEBI" id="CHEBI:57540"/>
    </ligand>
</feature>
<feature type="binding site" evidence="1">
    <location>
        <begin position="112"/>
        <end position="113"/>
    </location>
    <ligand>
        <name>NAD(+)</name>
        <dbReference type="ChEBI" id="CHEBI:57540"/>
    </ligand>
</feature>
<feature type="binding site" evidence="1">
    <location>
        <begin position="141"/>
        <end position="142"/>
    </location>
    <ligand>
        <name>NAD(+)</name>
        <dbReference type="ChEBI" id="CHEBI:57540"/>
    </ligand>
</feature>
<feature type="binding site" evidence="1">
    <location>
        <position position="227"/>
    </location>
    <ligand>
        <name>substrate</name>
    </ligand>
</feature>
<feature type="binding site" evidence="1">
    <location>
        <position position="246"/>
    </location>
    <ligand>
        <name>NAD(+)</name>
        <dbReference type="ChEBI" id="CHEBI:57540"/>
    </ligand>
</feature>
<feature type="binding site" evidence="1">
    <location>
        <begin position="275"/>
        <end position="277"/>
    </location>
    <ligand>
        <name>NAD(+)</name>
        <dbReference type="ChEBI" id="CHEBI:57540"/>
    </ligand>
</feature>
<feature type="site" description="Plays an important role in discriminating NADH against NADPH" evidence="1">
    <location>
        <position position="76"/>
    </location>
</feature>
<organism>
    <name type="scientific">Photobacterium profundum (strain SS9)</name>
    <dbReference type="NCBI Taxonomy" id="298386"/>
    <lineage>
        <taxon>Bacteria</taxon>
        <taxon>Pseudomonadati</taxon>
        <taxon>Pseudomonadota</taxon>
        <taxon>Gammaproteobacteria</taxon>
        <taxon>Vibrionales</taxon>
        <taxon>Vibrionaceae</taxon>
        <taxon>Photobacterium</taxon>
    </lineage>
</organism>
<keyword id="KW-0275">Fatty acid biosynthesis</keyword>
<keyword id="KW-0276">Fatty acid metabolism</keyword>
<keyword id="KW-0444">Lipid biosynthesis</keyword>
<keyword id="KW-0443">Lipid metabolism</keyword>
<keyword id="KW-0520">NAD</keyword>
<keyword id="KW-0560">Oxidoreductase</keyword>
<keyword id="KW-1185">Reference proteome</keyword>
<reference key="1">
    <citation type="journal article" date="2005" name="Science">
        <title>Life at depth: Photobacterium profundum genome sequence and expression analysis.</title>
        <authorList>
            <person name="Vezzi A."/>
            <person name="Campanaro S."/>
            <person name="D'Angelo M."/>
            <person name="Simonato F."/>
            <person name="Vitulo N."/>
            <person name="Lauro F.M."/>
            <person name="Cestaro A."/>
            <person name="Malacrida G."/>
            <person name="Simionati B."/>
            <person name="Cannata N."/>
            <person name="Romualdi C."/>
            <person name="Bartlett D.H."/>
            <person name="Valle G."/>
        </authorList>
    </citation>
    <scope>NUCLEOTIDE SEQUENCE [LARGE SCALE GENOMIC DNA]</scope>
    <source>
        <strain>ATCC BAA-1253 / SS9</strain>
    </source>
</reference>
<proteinExistence type="inferred from homology"/>